<gene>
    <name type="primary">oadG</name>
</gene>
<keyword id="KW-1003">Cell membrane</keyword>
<keyword id="KW-0903">Direct protein sequencing</keyword>
<keyword id="KW-0406">Ion transport</keyword>
<keyword id="KW-0472">Membrane</keyword>
<keyword id="KW-0915">Sodium</keyword>
<keyword id="KW-0739">Sodium transport</keyword>
<keyword id="KW-1278">Translocase</keyword>
<keyword id="KW-0812">Transmembrane</keyword>
<keyword id="KW-1133">Transmembrane helix</keyword>
<keyword id="KW-0813">Transport</keyword>
<protein>
    <recommendedName>
        <fullName>Oxaloacetate decarboxylase gamma chain</fullName>
        <ecNumber>7.2.4.2</ecNumber>
    </recommendedName>
</protein>
<comment type="function">
    <text>Catalyzes the decarboxylation of oxaloacetate coupled to Na(+) translocation.</text>
</comment>
<comment type="catalytic activity">
    <reaction>
        <text>oxaloacetate + 2 Na(+)(in) + H(+) = pyruvate + 2 Na(+)(out) + CO2</text>
        <dbReference type="Rhea" id="RHEA:57724"/>
        <dbReference type="ChEBI" id="CHEBI:15361"/>
        <dbReference type="ChEBI" id="CHEBI:15378"/>
        <dbReference type="ChEBI" id="CHEBI:16452"/>
        <dbReference type="ChEBI" id="CHEBI:16526"/>
        <dbReference type="ChEBI" id="CHEBI:29101"/>
        <dbReference type="EC" id="7.2.4.2"/>
    </reaction>
</comment>
<comment type="cofactor">
    <cofactor>
        <name>Na(+)</name>
        <dbReference type="ChEBI" id="CHEBI:29101"/>
    </cofactor>
</comment>
<comment type="subunit">
    <text>Heterotrimer of an alpha, a beta and a gamma subunit.</text>
</comment>
<comment type="subcellular location">
    <subcellularLocation>
        <location>Cell membrane</location>
        <topology>Single-pass membrane protein</topology>
    </subcellularLocation>
</comment>
<comment type="similarity">
    <text evidence="2">Belongs to the OadG family.</text>
</comment>
<accession>P13155</accession>
<organism>
    <name type="scientific">Klebsiella pneumoniae</name>
    <dbReference type="NCBI Taxonomy" id="573"/>
    <lineage>
        <taxon>Bacteria</taxon>
        <taxon>Pseudomonadati</taxon>
        <taxon>Pseudomonadota</taxon>
        <taxon>Gammaproteobacteria</taxon>
        <taxon>Enterobacterales</taxon>
        <taxon>Enterobacteriaceae</taxon>
        <taxon>Klebsiella/Raoultella group</taxon>
        <taxon>Klebsiella</taxon>
        <taxon>Klebsiella pneumoniae complex</taxon>
    </lineage>
</organism>
<reference key="1">
    <citation type="journal article" date="1989" name="J. Biol. Chem.">
        <title>The sodium ion translocating oxaloacetate decarboxylase of Klebsiella pneumoniae. Sequence of the integral membrane-bound subunits beta and gamma.</title>
        <authorList>
            <person name="Laussermair E."/>
            <person name="Schwarz E."/>
            <person name="Oesterhelt D."/>
            <person name="Reinke H."/>
            <person name="Beyreuther K."/>
            <person name="Dimroth P."/>
        </authorList>
    </citation>
    <scope>NUCLEOTIDE SEQUENCE [GENOMIC DNA]</scope>
    <scope>PARTIAL PROTEIN SEQUENCE</scope>
</reference>
<reference key="2">
    <citation type="journal article" date="1992" name="J. Biol. Chem.">
        <title>Nucleotide sequence and functional properties of a sodium-dependent citrate transport system from Klebsiella pneumoniae.</title>
        <authorList>
            <person name="van der Rest M.E."/>
            <person name="Siewe R.M."/>
            <person name="Abee T."/>
            <person name="Schwarz E."/>
            <person name="Oesterhelt D."/>
            <person name="Konings W.N."/>
        </authorList>
    </citation>
    <scope>NUCLEOTIDE SEQUENCE [GENOMIC DNA]</scope>
    <source>
        <strain>ATCC 13882 / NBRC 13541 / NCTC 8172</strain>
    </source>
</reference>
<feature type="chain" id="PRO_0000216451" description="Oxaloacetate decarboxylase gamma chain">
    <location>
        <begin position="1"/>
        <end position="83"/>
    </location>
</feature>
<feature type="transmembrane region" description="Helical" evidence="1">
    <location>
        <begin position="11"/>
        <end position="33"/>
    </location>
</feature>
<proteinExistence type="evidence at protein level"/>
<name>OADG_KLEPN</name>
<evidence type="ECO:0000255" key="1"/>
<evidence type="ECO:0000305" key="2"/>
<sequence length="83" mass="8909">MTDNAVLLGEGFTLMCLGMGFVLVFLLLLIFAIRGMSLAVNRLFPEPPAAPKPAPAAVAPADDFARLKPAIVAAIHHHRRLHP</sequence>
<dbReference type="EC" id="7.2.4.2"/>
<dbReference type="EMBL" id="AH000911">
    <property type="protein sequence ID" value="AAA25117.1"/>
    <property type="molecule type" value="Genomic_DNA"/>
</dbReference>
<dbReference type="EMBL" id="M83146">
    <property type="protein sequence ID" value="AAA25061.1"/>
    <property type="molecule type" value="Genomic_DNA"/>
</dbReference>
<dbReference type="PIR" id="A36505">
    <property type="entry name" value="A36505"/>
</dbReference>
<dbReference type="RefSeq" id="WP_004151376.1">
    <property type="nucleotide sequence ID" value="NZ_WXZY01000006.1"/>
</dbReference>
<dbReference type="SMR" id="P13155"/>
<dbReference type="GO" id="GO:0005886">
    <property type="term" value="C:plasma membrane"/>
    <property type="evidence" value="ECO:0007669"/>
    <property type="project" value="UniProtKB-SubCell"/>
</dbReference>
<dbReference type="GO" id="GO:0015451">
    <property type="term" value="F:decarboxylation-driven active transmembrane transporter activity"/>
    <property type="evidence" value="ECO:0007669"/>
    <property type="project" value="UniProtKB-EC"/>
</dbReference>
<dbReference type="GO" id="GO:0008948">
    <property type="term" value="F:oxaloacetate decarboxylase activity"/>
    <property type="evidence" value="ECO:0007669"/>
    <property type="project" value="UniProtKB-UniRule"/>
</dbReference>
<dbReference type="GO" id="GO:0015081">
    <property type="term" value="F:sodium ion transmembrane transporter activity"/>
    <property type="evidence" value="ECO:0007669"/>
    <property type="project" value="UniProtKB-UniRule"/>
</dbReference>
<dbReference type="GO" id="GO:0036376">
    <property type="term" value="P:sodium ion export across plasma membrane"/>
    <property type="evidence" value="ECO:0007669"/>
    <property type="project" value="InterPro"/>
</dbReference>
<dbReference type="HAMAP" id="MF_00404">
    <property type="entry name" value="OadG"/>
    <property type="match status" value="1"/>
</dbReference>
<dbReference type="InterPro" id="IPR005899">
    <property type="entry name" value="Na_pump_deCOase"/>
</dbReference>
<dbReference type="InterPro" id="IPR023424">
    <property type="entry name" value="OadG"/>
</dbReference>
<dbReference type="NCBIfam" id="TIGR01195">
    <property type="entry name" value="oadG_fam"/>
    <property type="match status" value="1"/>
</dbReference>
<dbReference type="NCBIfam" id="NF002792">
    <property type="entry name" value="PRK02919.1"/>
    <property type="match status" value="1"/>
</dbReference>
<dbReference type="Pfam" id="PF04277">
    <property type="entry name" value="OAD_gamma"/>
    <property type="match status" value="1"/>
</dbReference>